<reference key="1">
    <citation type="journal article" date="2004" name="Proc. Natl. Acad. Sci. U.S.A.">
        <title>The diploid genome sequence of Candida albicans.</title>
        <authorList>
            <person name="Jones T."/>
            <person name="Federspiel N.A."/>
            <person name="Chibana H."/>
            <person name="Dungan J."/>
            <person name="Kalman S."/>
            <person name="Magee B.B."/>
            <person name="Newport G."/>
            <person name="Thorstenson Y.R."/>
            <person name="Agabian N."/>
            <person name="Magee P.T."/>
            <person name="Davis R.W."/>
            <person name="Scherer S."/>
        </authorList>
    </citation>
    <scope>NUCLEOTIDE SEQUENCE [LARGE SCALE GENOMIC DNA]</scope>
    <source>
        <strain>SC5314 / ATCC MYA-2876</strain>
    </source>
</reference>
<reference key="2">
    <citation type="journal article" date="2007" name="Genome Biol.">
        <title>Assembly of the Candida albicans genome into sixteen supercontigs aligned on the eight chromosomes.</title>
        <authorList>
            <person name="van het Hoog M."/>
            <person name="Rast T.J."/>
            <person name="Martchenko M."/>
            <person name="Grindle S."/>
            <person name="Dignard D."/>
            <person name="Hogues H."/>
            <person name="Cuomo C."/>
            <person name="Berriman M."/>
            <person name="Scherer S."/>
            <person name="Magee B.B."/>
            <person name="Whiteway M."/>
            <person name="Chibana H."/>
            <person name="Nantel A."/>
            <person name="Magee P.T."/>
        </authorList>
    </citation>
    <scope>GENOME REANNOTATION</scope>
    <source>
        <strain>SC5314 / ATCC MYA-2876</strain>
    </source>
</reference>
<reference key="3">
    <citation type="journal article" date="2013" name="Genome Biol.">
        <title>Assembly of a phased diploid Candida albicans genome facilitates allele-specific measurements and provides a simple model for repeat and indel structure.</title>
        <authorList>
            <person name="Muzzey D."/>
            <person name="Schwartz K."/>
            <person name="Weissman J.S."/>
            <person name="Sherlock G."/>
        </authorList>
    </citation>
    <scope>NUCLEOTIDE SEQUENCE [LARGE SCALE GENOMIC DNA]</scope>
    <scope>GENOME REANNOTATION</scope>
    <source>
        <strain>SC5314 / ATCC MYA-2876</strain>
    </source>
</reference>
<reference key="4">
    <citation type="journal article" date="2005" name="Mol. Biol. Cell">
        <title>Transcriptional response of Candida albicans to nitric oxide and the role of the YHB1 gene in nitrosative stress and virulence.</title>
        <authorList>
            <person name="Hromatka B.S."/>
            <person name="Noble S.M."/>
            <person name="Johnson A.D."/>
        </authorList>
    </citation>
    <scope>INDUCTION</scope>
</reference>
<reference key="5">
    <citation type="journal article" date="2015" name="J. Proteomics">
        <title>Candida albicans cell shaving uncovers new proteins involved in cell wall integrity, yeast to hypha transition, stress response and host-pathogen interaction.</title>
        <authorList>
            <person name="Gil-Bona A."/>
            <person name="Parra-Giraldo C.M."/>
            <person name="Hernaez M.L."/>
            <person name="Reales-Calderon J.A."/>
            <person name="Solis N.V."/>
            <person name="Filler S.G."/>
            <person name="Monteoliva L."/>
            <person name="Gil C."/>
        </authorList>
    </citation>
    <scope>FUNCTION</scope>
    <scope>DISRUPTION PHENOTYPE</scope>
</reference>
<gene>
    <name type="ordered locus">CAALFM_CR10140WA</name>
    <name type="ordered locus">orf19.7591</name>
</gene>
<proteinExistence type="evidence at transcript level"/>
<keyword id="KW-0004">4Fe-4S</keyword>
<keyword id="KW-0249">Electron transport</keyword>
<keyword id="KW-0408">Iron</keyword>
<keyword id="KW-0411">Iron-sulfur</keyword>
<keyword id="KW-0479">Metal-binding</keyword>
<keyword id="KW-0496">Mitochondrion</keyword>
<keyword id="KW-0520">NAD</keyword>
<keyword id="KW-0560">Oxidoreductase</keyword>
<keyword id="KW-1185">Reference proteome</keyword>
<keyword id="KW-0679">Respiratory chain</keyword>
<keyword id="KW-0809">Transit peptide</keyword>
<keyword id="KW-1278">Translocase</keyword>
<keyword id="KW-0813">Transport</keyword>
<keyword id="KW-0830">Ubiquinone</keyword>
<keyword id="KW-0843">Virulence</keyword>
<dbReference type="EC" id="7.1.1.2" evidence="1"/>
<dbReference type="EMBL" id="CP017630">
    <property type="protein sequence ID" value="AOW31666.1"/>
    <property type="molecule type" value="Genomic_DNA"/>
</dbReference>
<dbReference type="RefSeq" id="XP_719353.2">
    <property type="nucleotide sequence ID" value="XM_714260.2"/>
</dbReference>
<dbReference type="SMR" id="A0A1D8PU51"/>
<dbReference type="STRING" id="237561.A0A1D8PU51"/>
<dbReference type="EnsemblFungi" id="CR_10140W_A-T">
    <property type="protein sequence ID" value="CR_10140W_A-T-p1"/>
    <property type="gene ID" value="CR_10140W_A"/>
</dbReference>
<dbReference type="GeneID" id="3638972"/>
<dbReference type="KEGG" id="cal:CAALFM_CR10140WA"/>
<dbReference type="CGD" id="CAL0000186451">
    <property type="gene designation" value="orf19.7591"/>
</dbReference>
<dbReference type="VEuPathDB" id="FungiDB:CR_10140W_A"/>
<dbReference type="eggNOG" id="KOG2282">
    <property type="taxonomic scope" value="Eukaryota"/>
</dbReference>
<dbReference type="InParanoid" id="A0A1D8PU51"/>
<dbReference type="OMA" id="QAMAYGV"/>
<dbReference type="OrthoDB" id="10249365at2759"/>
<dbReference type="Proteomes" id="UP000000559">
    <property type="component" value="Chromosome R"/>
</dbReference>
<dbReference type="GO" id="GO:0016020">
    <property type="term" value="C:membrane"/>
    <property type="evidence" value="ECO:0000314"/>
    <property type="project" value="CGD"/>
</dbReference>
<dbReference type="GO" id="GO:0005739">
    <property type="term" value="C:mitochondrion"/>
    <property type="evidence" value="ECO:0007669"/>
    <property type="project" value="UniProtKB-SubCell"/>
</dbReference>
<dbReference type="GO" id="GO:0051539">
    <property type="term" value="F:4 iron, 4 sulfur cluster binding"/>
    <property type="evidence" value="ECO:0007669"/>
    <property type="project" value="UniProtKB-KW"/>
</dbReference>
<dbReference type="GO" id="GO:0046872">
    <property type="term" value="F:metal ion binding"/>
    <property type="evidence" value="ECO:0007669"/>
    <property type="project" value="UniProtKB-KW"/>
</dbReference>
<dbReference type="GO" id="GO:0008137">
    <property type="term" value="F:NADH dehydrogenase (ubiquinone) activity"/>
    <property type="evidence" value="ECO:0007669"/>
    <property type="project" value="InterPro"/>
</dbReference>
<dbReference type="GO" id="GO:0042773">
    <property type="term" value="P:ATP synthesis coupled electron transport"/>
    <property type="evidence" value="ECO:0007669"/>
    <property type="project" value="InterPro"/>
</dbReference>
<dbReference type="CDD" id="cd00207">
    <property type="entry name" value="fer2"/>
    <property type="match status" value="1"/>
</dbReference>
<dbReference type="CDD" id="cd02773">
    <property type="entry name" value="MopB_Res-Cmplx1_Nad11"/>
    <property type="match status" value="1"/>
</dbReference>
<dbReference type="FunFam" id="3.40.50.740:FF:000016">
    <property type="entry name" value="NADH dehydrogenase (Quinone), G subunit"/>
    <property type="match status" value="1"/>
</dbReference>
<dbReference type="FunFam" id="3.10.20.740:FF:000001">
    <property type="entry name" value="NADH-quinone oxidoreductase subunit G"/>
    <property type="match status" value="1"/>
</dbReference>
<dbReference type="FunFam" id="3.30.200.210:FF:000002">
    <property type="entry name" value="NADH-ubiquinone oxidoreductase 75 kDa subunit"/>
    <property type="match status" value="1"/>
</dbReference>
<dbReference type="FunFam" id="3.30.70.20:FF:000002">
    <property type="entry name" value="NADH-ubiquinone oxidoreductase 75 kDa subunit"/>
    <property type="match status" value="1"/>
</dbReference>
<dbReference type="Gene3D" id="3.10.20.740">
    <property type="match status" value="1"/>
</dbReference>
<dbReference type="Gene3D" id="3.30.200.210">
    <property type="match status" value="1"/>
</dbReference>
<dbReference type="Gene3D" id="3.30.70.20">
    <property type="match status" value="1"/>
</dbReference>
<dbReference type="Gene3D" id="3.40.50.740">
    <property type="match status" value="1"/>
</dbReference>
<dbReference type="InterPro" id="IPR036010">
    <property type="entry name" value="2Fe-2S_ferredoxin-like_sf"/>
</dbReference>
<dbReference type="InterPro" id="IPR001041">
    <property type="entry name" value="2Fe-2S_ferredoxin-type"/>
</dbReference>
<dbReference type="InterPro" id="IPR006656">
    <property type="entry name" value="Mopterin_OxRdtase"/>
</dbReference>
<dbReference type="InterPro" id="IPR006963">
    <property type="entry name" value="Mopterin_OxRdtase_4Fe-4S_dom"/>
</dbReference>
<dbReference type="InterPro" id="IPR000283">
    <property type="entry name" value="NADH_UbQ_OxRdtase_75kDa_su_CS"/>
</dbReference>
<dbReference type="InterPro" id="IPR054351">
    <property type="entry name" value="NADH_UbQ_OxRdtase_ferredoxin"/>
</dbReference>
<dbReference type="InterPro" id="IPR010228">
    <property type="entry name" value="NADH_UbQ_OxRdtase_Gsu"/>
</dbReference>
<dbReference type="InterPro" id="IPR019574">
    <property type="entry name" value="NADH_UbQ_OxRdtase_Gsu_4Fe4S-bd"/>
</dbReference>
<dbReference type="InterPro" id="IPR015405">
    <property type="entry name" value="NDUFS1-like_C"/>
</dbReference>
<dbReference type="InterPro" id="IPR050123">
    <property type="entry name" value="Prok_molybdopt-oxidoreductase"/>
</dbReference>
<dbReference type="NCBIfam" id="TIGR01973">
    <property type="entry name" value="NuoG"/>
    <property type="match status" value="1"/>
</dbReference>
<dbReference type="PANTHER" id="PTHR43105:SF13">
    <property type="entry name" value="NADH-UBIQUINONE OXIDOREDUCTASE 75 KDA SUBUNIT, MITOCHONDRIAL"/>
    <property type="match status" value="1"/>
</dbReference>
<dbReference type="PANTHER" id="PTHR43105">
    <property type="entry name" value="RESPIRATORY NITRATE REDUCTASE"/>
    <property type="match status" value="1"/>
</dbReference>
<dbReference type="Pfam" id="PF13510">
    <property type="entry name" value="Fer2_4"/>
    <property type="match status" value="1"/>
</dbReference>
<dbReference type="Pfam" id="PF22151">
    <property type="entry name" value="Fer4_NDSU1"/>
    <property type="match status" value="1"/>
</dbReference>
<dbReference type="Pfam" id="PF22117">
    <property type="entry name" value="Fer4_Nqo3"/>
    <property type="match status" value="1"/>
</dbReference>
<dbReference type="Pfam" id="PF00384">
    <property type="entry name" value="Molybdopterin"/>
    <property type="match status" value="1"/>
</dbReference>
<dbReference type="Pfam" id="PF10588">
    <property type="entry name" value="NADH-G_4Fe-4S_3"/>
    <property type="match status" value="1"/>
</dbReference>
<dbReference type="Pfam" id="PF09326">
    <property type="entry name" value="NADH_dhqG_C"/>
    <property type="match status" value="1"/>
</dbReference>
<dbReference type="SMART" id="SM00929">
    <property type="entry name" value="NADH-G_4Fe-4S_3"/>
    <property type="match status" value="1"/>
</dbReference>
<dbReference type="SUPFAM" id="SSF54292">
    <property type="entry name" value="2Fe-2S ferredoxin-like"/>
    <property type="match status" value="1"/>
</dbReference>
<dbReference type="SUPFAM" id="SSF54862">
    <property type="entry name" value="4Fe-4S ferredoxins"/>
    <property type="match status" value="1"/>
</dbReference>
<dbReference type="SUPFAM" id="SSF53706">
    <property type="entry name" value="Formate dehydrogenase/DMSO reductase, domains 1-3"/>
    <property type="match status" value="1"/>
</dbReference>
<dbReference type="PROSITE" id="PS51085">
    <property type="entry name" value="2FE2S_FER_2"/>
    <property type="match status" value="1"/>
</dbReference>
<dbReference type="PROSITE" id="PS51839">
    <property type="entry name" value="4FE4S_HC3"/>
    <property type="match status" value="1"/>
</dbReference>
<dbReference type="PROSITE" id="PS51669">
    <property type="entry name" value="4FE4S_MOW_BIS_MGD"/>
    <property type="match status" value="1"/>
</dbReference>
<dbReference type="PROSITE" id="PS00641">
    <property type="entry name" value="COMPLEX1_75K_1"/>
    <property type="match status" value="1"/>
</dbReference>
<dbReference type="PROSITE" id="PS00642">
    <property type="entry name" value="COMPLEX1_75K_2"/>
    <property type="match status" value="1"/>
</dbReference>
<dbReference type="PROSITE" id="PS00643">
    <property type="entry name" value="COMPLEX1_75K_3"/>
    <property type="match status" value="1"/>
</dbReference>
<accession>A0A1D8PU51</accession>
<sequence>MNSIKSHILRSSKRYISASSKRLAEVEVTVDGRKVSIEAGSSIIQAAELAGVTIPRYCYHDKLAIAGNCRMCLVDVERMPKLIASCAMPVQNGMVVHTDSERIKKAREGVTEMLLENHPLDCPVCDQGGECDLQEQSQRYGSDRGRFHEVVGKRAVENKAIGPLVKTSMNRCIHCTRCVRFMNDVAGAPEFGTAGRGNDMQIGTYIERNINSEMSGNIIDLCPVGALTSKPYAFRARPWELKRTETIDVLDAVGSNIRVDTRGIEVMRVLPRLNDDVNEEWISDKTRFACDGLKTQRLTTPLIRNGDKFETATWDEALSTIAAAYSKINPQNGELKAIAGALVDAESLVSLKDLVNKLGSENVTTDVKQSVNAHGFDIRSNYIFNSTIDGIEDADQILLVGTNPRFEAAVLNTRIRKVWLRSNLEISSVGQDFNSTFDVTNLGEDAKALESALQGSVGEKLGQAKKPLIIVGSGVAESKDSEAIYKLVGEFASKHENFNSGEWNGVNLLHREASRVAALDLGFNTLVEDSTKAKFIYLLGADEITNKDIPKDAFVVYQGHHGDLGASFADVILPGSAYTEKSGTYVNTEGRVQATRAATNPPGVAREDWKIIRALSEYLNAKLPYDDIYSVRLRLGEIAPHLVRHDVIEPVSQEIAKIGFNDLVNKNKSATIFEEPLKNPIDNFYFTDVISRSSPTMAKCISTFGAKIEKVKDEKPDINF</sequence>
<comment type="function">
    <text evidence="1 8">Core subunit of the mitochondrial membrane respiratory chain NADH dehydrogenase (Complex I) which catalyzes electron transfer from NADH through the respiratory chain, using ubiquinone as an electron acceptor (By similarity). Essential for catalysing the entry and efficient transfer of electrons within complex I. Plays a key role in the assembly and stability of complex I and participates in the association of complex I with ubiquinol-cytochrome reductase complex (Complex III) to form supercomplexes (By similarity). Plays a role in cell wall integrity and is involved in osmotic and oxidative resistance, yeast to hypha transition, and the ability to damage and invade oral epithelial cells (PubMed:26087349).</text>
</comment>
<comment type="catalytic activity">
    <reaction evidence="1">
        <text>a ubiquinone + NADH + 5 H(+)(in) = a ubiquinol + NAD(+) + 4 H(+)(out)</text>
        <dbReference type="Rhea" id="RHEA:29091"/>
        <dbReference type="Rhea" id="RHEA-COMP:9565"/>
        <dbReference type="Rhea" id="RHEA-COMP:9566"/>
        <dbReference type="ChEBI" id="CHEBI:15378"/>
        <dbReference type="ChEBI" id="CHEBI:16389"/>
        <dbReference type="ChEBI" id="CHEBI:17976"/>
        <dbReference type="ChEBI" id="CHEBI:57540"/>
        <dbReference type="ChEBI" id="CHEBI:57945"/>
        <dbReference type="EC" id="7.1.1.2"/>
    </reaction>
</comment>
<comment type="cofactor">
    <cofactor evidence="2">
        <name>[2Fe-2S] cluster</name>
        <dbReference type="ChEBI" id="CHEBI:190135"/>
    </cofactor>
    <text evidence="2">Binds 1 [2Fe-2S] cluster per subunit.</text>
</comment>
<comment type="cofactor">
    <cofactor evidence="2">
        <name>[4Fe-4S] cluster</name>
        <dbReference type="ChEBI" id="CHEBI:49883"/>
    </cofactor>
    <text evidence="2">Binds 2 [4Fe-4S] clusters per subunit.</text>
</comment>
<comment type="subunit">
    <text evidence="1">Core subunit of respiratory chain NADH dehydrogenase (Complex I) which is composed of 45 different subunits. This is the largest subunit of complex I and it is a component of the iron-sulfur (IP) fragment of the enzyme.</text>
</comment>
<comment type="subcellular location">
    <subcellularLocation>
        <location evidence="3">Mitochondrion</location>
    </subcellularLocation>
</comment>
<comment type="induction">
    <text evidence="7">Expression is repressed in the presence of nitric oxide.</text>
</comment>
<comment type="disruption phenotype">
    <text evidence="8">Leads to sensitivity to both cell-wall damaging agents calcofluor white and Congo red, as well as to thermosensitivity (PubMed:26087349). Also increases the sensitivity to oxidative stress agents H(2)O(2) and menadione (PubMed:26087349). Impairs the yeast to hypha transition (PubMed:26087349). Causes significantly less damage to host oral epithelial cells (PubMed:26087349).</text>
</comment>
<comment type="similarity">
    <text evidence="9">Belongs to the complex I 75 kDa subunit family.</text>
</comment>
<organism>
    <name type="scientific">Candida albicans (strain SC5314 / ATCC MYA-2876)</name>
    <name type="common">Yeast</name>
    <dbReference type="NCBI Taxonomy" id="237561"/>
    <lineage>
        <taxon>Eukaryota</taxon>
        <taxon>Fungi</taxon>
        <taxon>Dikarya</taxon>
        <taxon>Ascomycota</taxon>
        <taxon>Saccharomycotina</taxon>
        <taxon>Pichiomycetes</taxon>
        <taxon>Debaryomycetaceae</taxon>
        <taxon>Candida/Lodderomyces clade</taxon>
        <taxon>Candida</taxon>
    </lineage>
</organism>
<protein>
    <recommendedName>
        <fullName evidence="1">NADH-ubiquinone oxidoreductase 78 kDa subunit, mitochondrial</fullName>
        <ecNumber evidence="1">7.1.1.2</ecNumber>
    </recommendedName>
</protein>
<name>NDUS1_CANAL</name>
<feature type="transit peptide" description="Mitochondrion" evidence="3">
    <location>
        <begin position="1"/>
        <end position="23"/>
    </location>
</feature>
<feature type="chain" id="PRO_0000459486" description="NADH-ubiquinone oxidoreductase 78 kDa subunit, mitochondrial" evidence="3">
    <location>
        <begin position="24"/>
        <end position="720"/>
    </location>
</feature>
<feature type="domain" description="2Fe-2S ferredoxin-type" evidence="4">
    <location>
        <begin position="24"/>
        <end position="102"/>
    </location>
</feature>
<feature type="domain" description="4Fe-4S His(Cys)3-ligated-type" evidence="6">
    <location>
        <begin position="102"/>
        <end position="141"/>
    </location>
</feature>
<feature type="domain" description="4Fe-4S Mo/W bis-MGD-type" evidence="5">
    <location>
        <begin position="241"/>
        <end position="297"/>
    </location>
</feature>
<feature type="binding site" evidence="4">
    <location>
        <position position="58"/>
    </location>
    <ligand>
        <name>[2Fe-2S] cluster</name>
        <dbReference type="ChEBI" id="CHEBI:190135"/>
    </ligand>
</feature>
<feature type="binding site" evidence="4">
    <location>
        <position position="69"/>
    </location>
    <ligand>
        <name>[2Fe-2S] cluster</name>
        <dbReference type="ChEBI" id="CHEBI:190135"/>
    </ligand>
</feature>
<feature type="binding site" evidence="4">
    <location>
        <position position="72"/>
    </location>
    <ligand>
        <name>[2Fe-2S] cluster</name>
        <dbReference type="ChEBI" id="CHEBI:190135"/>
    </ligand>
</feature>
<feature type="binding site" evidence="4">
    <location>
        <position position="86"/>
    </location>
    <ligand>
        <name>[2Fe-2S] cluster</name>
        <dbReference type="ChEBI" id="CHEBI:190135"/>
    </ligand>
</feature>
<evidence type="ECO:0000250" key="1">
    <source>
        <dbReference type="UniProtKB" id="P28331"/>
    </source>
</evidence>
<evidence type="ECO:0000250" key="2">
    <source>
        <dbReference type="UniProtKB" id="Q56223"/>
    </source>
</evidence>
<evidence type="ECO:0000255" key="3"/>
<evidence type="ECO:0000255" key="4">
    <source>
        <dbReference type="PROSITE-ProRule" id="PRU00465"/>
    </source>
</evidence>
<evidence type="ECO:0000255" key="5">
    <source>
        <dbReference type="PROSITE-ProRule" id="PRU01004"/>
    </source>
</evidence>
<evidence type="ECO:0000255" key="6">
    <source>
        <dbReference type="PROSITE-ProRule" id="PRU01184"/>
    </source>
</evidence>
<evidence type="ECO:0000269" key="7">
    <source>
    </source>
</evidence>
<evidence type="ECO:0000269" key="8">
    <source>
    </source>
</evidence>
<evidence type="ECO:0000305" key="9"/>